<keyword id="KW-0131">Cell cycle</keyword>
<keyword id="KW-0132">Cell division</keyword>
<keyword id="KW-0143">Chaperone</keyword>
<keyword id="KW-0963">Cytoplasm</keyword>
<keyword id="KW-0413">Isomerase</keyword>
<keyword id="KW-1185">Reference proteome</keyword>
<keyword id="KW-0697">Rotamase</keyword>
<gene>
    <name evidence="1" type="primary">tig</name>
    <name type="ordered locus">Sden_2496</name>
</gene>
<protein>
    <recommendedName>
        <fullName evidence="1">Trigger factor</fullName>
        <shortName evidence="1">TF</shortName>
        <ecNumber evidence="1">5.2.1.8</ecNumber>
    </recommendedName>
    <alternativeName>
        <fullName evidence="1">PPIase</fullName>
    </alternativeName>
</protein>
<name>TIG_SHEDO</name>
<proteinExistence type="inferred from homology"/>
<evidence type="ECO:0000255" key="1">
    <source>
        <dbReference type="HAMAP-Rule" id="MF_00303"/>
    </source>
</evidence>
<comment type="function">
    <text evidence="1">Involved in protein export. Acts as a chaperone by maintaining the newly synthesized protein in an open conformation. Functions as a peptidyl-prolyl cis-trans isomerase.</text>
</comment>
<comment type="catalytic activity">
    <reaction evidence="1">
        <text>[protein]-peptidylproline (omega=180) = [protein]-peptidylproline (omega=0)</text>
        <dbReference type="Rhea" id="RHEA:16237"/>
        <dbReference type="Rhea" id="RHEA-COMP:10747"/>
        <dbReference type="Rhea" id="RHEA-COMP:10748"/>
        <dbReference type="ChEBI" id="CHEBI:83833"/>
        <dbReference type="ChEBI" id="CHEBI:83834"/>
        <dbReference type="EC" id="5.2.1.8"/>
    </reaction>
</comment>
<comment type="subcellular location">
    <subcellularLocation>
        <location>Cytoplasm</location>
    </subcellularLocation>
    <text evidence="1">About half TF is bound to the ribosome near the polypeptide exit tunnel while the other half is free in the cytoplasm.</text>
</comment>
<comment type="domain">
    <text evidence="1">Consists of 3 domains; the N-terminus binds the ribosome, the middle domain has PPIase activity, while the C-terminus has intrinsic chaperone activity on its own.</text>
</comment>
<comment type="similarity">
    <text evidence="1">Belongs to the FKBP-type PPIase family. Tig subfamily.</text>
</comment>
<feature type="chain" id="PRO_1000022754" description="Trigger factor">
    <location>
        <begin position="1"/>
        <end position="434"/>
    </location>
</feature>
<feature type="domain" description="PPIase FKBP-type" evidence="1">
    <location>
        <begin position="160"/>
        <end position="245"/>
    </location>
</feature>
<dbReference type="EC" id="5.2.1.8" evidence="1"/>
<dbReference type="EMBL" id="CP000302">
    <property type="protein sequence ID" value="ABE55776.1"/>
    <property type="molecule type" value="Genomic_DNA"/>
</dbReference>
<dbReference type="RefSeq" id="WP_011496927.1">
    <property type="nucleotide sequence ID" value="NC_007954.1"/>
</dbReference>
<dbReference type="SMR" id="Q12LA0"/>
<dbReference type="STRING" id="318161.Sden_2496"/>
<dbReference type="KEGG" id="sdn:Sden_2496"/>
<dbReference type="eggNOG" id="COG0544">
    <property type="taxonomic scope" value="Bacteria"/>
</dbReference>
<dbReference type="HOGENOM" id="CLU_033058_2_0_6"/>
<dbReference type="OrthoDB" id="9767721at2"/>
<dbReference type="Proteomes" id="UP000001982">
    <property type="component" value="Chromosome"/>
</dbReference>
<dbReference type="GO" id="GO:0005737">
    <property type="term" value="C:cytoplasm"/>
    <property type="evidence" value="ECO:0007669"/>
    <property type="project" value="UniProtKB-SubCell"/>
</dbReference>
<dbReference type="GO" id="GO:0003755">
    <property type="term" value="F:peptidyl-prolyl cis-trans isomerase activity"/>
    <property type="evidence" value="ECO:0007669"/>
    <property type="project" value="UniProtKB-UniRule"/>
</dbReference>
<dbReference type="GO" id="GO:0044183">
    <property type="term" value="F:protein folding chaperone"/>
    <property type="evidence" value="ECO:0007669"/>
    <property type="project" value="TreeGrafter"/>
</dbReference>
<dbReference type="GO" id="GO:0043022">
    <property type="term" value="F:ribosome binding"/>
    <property type="evidence" value="ECO:0007669"/>
    <property type="project" value="TreeGrafter"/>
</dbReference>
<dbReference type="GO" id="GO:0051083">
    <property type="term" value="P:'de novo' cotranslational protein folding"/>
    <property type="evidence" value="ECO:0007669"/>
    <property type="project" value="TreeGrafter"/>
</dbReference>
<dbReference type="GO" id="GO:0051301">
    <property type="term" value="P:cell division"/>
    <property type="evidence" value="ECO:0007669"/>
    <property type="project" value="UniProtKB-KW"/>
</dbReference>
<dbReference type="GO" id="GO:0061077">
    <property type="term" value="P:chaperone-mediated protein folding"/>
    <property type="evidence" value="ECO:0007669"/>
    <property type="project" value="TreeGrafter"/>
</dbReference>
<dbReference type="GO" id="GO:0015031">
    <property type="term" value="P:protein transport"/>
    <property type="evidence" value="ECO:0007669"/>
    <property type="project" value="UniProtKB-UniRule"/>
</dbReference>
<dbReference type="GO" id="GO:0043335">
    <property type="term" value="P:protein unfolding"/>
    <property type="evidence" value="ECO:0007669"/>
    <property type="project" value="TreeGrafter"/>
</dbReference>
<dbReference type="FunFam" id="3.10.50.40:FF:000001">
    <property type="entry name" value="Trigger factor"/>
    <property type="match status" value="1"/>
</dbReference>
<dbReference type="Gene3D" id="3.10.50.40">
    <property type="match status" value="1"/>
</dbReference>
<dbReference type="Gene3D" id="3.30.70.1050">
    <property type="entry name" value="Trigger factor ribosome-binding domain"/>
    <property type="match status" value="1"/>
</dbReference>
<dbReference type="Gene3D" id="1.10.3120.10">
    <property type="entry name" value="Trigger factor, C-terminal domain"/>
    <property type="match status" value="1"/>
</dbReference>
<dbReference type="HAMAP" id="MF_00303">
    <property type="entry name" value="Trigger_factor_Tig"/>
    <property type="match status" value="1"/>
</dbReference>
<dbReference type="InterPro" id="IPR046357">
    <property type="entry name" value="PPIase_dom_sf"/>
</dbReference>
<dbReference type="InterPro" id="IPR001179">
    <property type="entry name" value="PPIase_FKBP_dom"/>
</dbReference>
<dbReference type="InterPro" id="IPR005215">
    <property type="entry name" value="Trig_fac"/>
</dbReference>
<dbReference type="InterPro" id="IPR008880">
    <property type="entry name" value="Trigger_fac_C"/>
</dbReference>
<dbReference type="InterPro" id="IPR037041">
    <property type="entry name" value="Trigger_fac_C_sf"/>
</dbReference>
<dbReference type="InterPro" id="IPR008881">
    <property type="entry name" value="Trigger_fac_ribosome-bd_bac"/>
</dbReference>
<dbReference type="InterPro" id="IPR036611">
    <property type="entry name" value="Trigger_fac_ribosome-bd_sf"/>
</dbReference>
<dbReference type="InterPro" id="IPR027304">
    <property type="entry name" value="Trigger_fact/SurA_dom_sf"/>
</dbReference>
<dbReference type="NCBIfam" id="TIGR00115">
    <property type="entry name" value="tig"/>
    <property type="match status" value="1"/>
</dbReference>
<dbReference type="PANTHER" id="PTHR30560">
    <property type="entry name" value="TRIGGER FACTOR CHAPERONE AND PEPTIDYL-PROLYL CIS/TRANS ISOMERASE"/>
    <property type="match status" value="1"/>
</dbReference>
<dbReference type="PANTHER" id="PTHR30560:SF3">
    <property type="entry name" value="TRIGGER FACTOR-LIKE PROTEIN TIG, CHLOROPLASTIC"/>
    <property type="match status" value="1"/>
</dbReference>
<dbReference type="Pfam" id="PF00254">
    <property type="entry name" value="FKBP_C"/>
    <property type="match status" value="1"/>
</dbReference>
<dbReference type="Pfam" id="PF05698">
    <property type="entry name" value="Trigger_C"/>
    <property type="match status" value="1"/>
</dbReference>
<dbReference type="Pfam" id="PF05697">
    <property type="entry name" value="Trigger_N"/>
    <property type="match status" value="1"/>
</dbReference>
<dbReference type="PIRSF" id="PIRSF003095">
    <property type="entry name" value="Trigger_factor"/>
    <property type="match status" value="1"/>
</dbReference>
<dbReference type="SUPFAM" id="SSF54534">
    <property type="entry name" value="FKBP-like"/>
    <property type="match status" value="1"/>
</dbReference>
<dbReference type="SUPFAM" id="SSF109998">
    <property type="entry name" value="Triger factor/SurA peptide-binding domain-like"/>
    <property type="match status" value="1"/>
</dbReference>
<dbReference type="SUPFAM" id="SSF102735">
    <property type="entry name" value="Trigger factor ribosome-binding domain"/>
    <property type="match status" value="1"/>
</dbReference>
<dbReference type="PROSITE" id="PS50059">
    <property type="entry name" value="FKBP_PPIASE"/>
    <property type="match status" value="1"/>
</dbReference>
<accession>Q12LA0</accession>
<reference key="1">
    <citation type="submission" date="2006-03" db="EMBL/GenBank/DDBJ databases">
        <title>Complete sequence of Shewanella denitrificans OS217.</title>
        <authorList>
            <consortium name="US DOE Joint Genome Institute"/>
            <person name="Copeland A."/>
            <person name="Lucas S."/>
            <person name="Lapidus A."/>
            <person name="Barry K."/>
            <person name="Detter J.C."/>
            <person name="Glavina del Rio T."/>
            <person name="Hammon N."/>
            <person name="Israni S."/>
            <person name="Dalin E."/>
            <person name="Tice H."/>
            <person name="Pitluck S."/>
            <person name="Brettin T."/>
            <person name="Bruce D."/>
            <person name="Han C."/>
            <person name="Tapia R."/>
            <person name="Gilna P."/>
            <person name="Kiss H."/>
            <person name="Schmutz J."/>
            <person name="Larimer F."/>
            <person name="Land M."/>
            <person name="Hauser L."/>
            <person name="Kyrpides N."/>
            <person name="Lykidis A."/>
            <person name="Richardson P."/>
        </authorList>
    </citation>
    <scope>NUCLEOTIDE SEQUENCE [LARGE SCALE GENOMIC DNA]</scope>
    <source>
        <strain>OS217 / ATCC BAA-1090 / DSM 15013</strain>
    </source>
</reference>
<organism>
    <name type="scientific">Shewanella denitrificans (strain OS217 / ATCC BAA-1090 / DSM 15013)</name>
    <dbReference type="NCBI Taxonomy" id="318161"/>
    <lineage>
        <taxon>Bacteria</taxon>
        <taxon>Pseudomonadati</taxon>
        <taxon>Pseudomonadota</taxon>
        <taxon>Gammaproteobacteria</taxon>
        <taxon>Alteromonadales</taxon>
        <taxon>Shewanellaceae</taxon>
        <taxon>Shewanella</taxon>
    </lineage>
</organism>
<sequence length="434" mass="47515">MQVSVETTEGLGRRLTISVPAEQIEKMVKDGITREAKRARLPGFRPGKVPLSEINKRYGQAIRQDVMGEVMQRNFIEAIIAEKLNPAGAPTFMPGKSVGESFEFVATFEIYPEITLTGLDTIAVEQPKAEVNDADLDAMIETLRKQHATFAVVERASAAGDKVKMNFVGSIDGEEFDGGKADDFELEIGSNRMIPGFETGVTGHKAGETFDIEVSFPEDYHAENLKGKAAKFAITLTEVQAAQLPEVNDEFATLFGITSGGVDALKAEIRKNMTRELEQALKANVKEQVINGLLAANDVTIPSALIDGEVEVLRKQAMQRFGGQTKNMPELPAELFTEQAERRVKIGLLLGEVIKTSELKAEDSRVQALIASMASAYEDPAEVVAYYNSNKEMMQNMRNVALEEQAVEALLKSAKVTTKEVAFEEFMNKASGRA</sequence>